<sequence>MSSQKKKISLFAFFLLTVITITLKTYFSYYVDFSLGVKGLVQNLILLMNPYSLVALVLSVFLFFKGKKAFWFMFIGGFLLTFLLYANVVYFRFFSDFLTFSTLNQVGNVESMGGAVSASFKWYDFVYFIDTLVYLFILIFKTKWLDTKAFSKKFVPVVMAASVALFFLNLAFAETDRPELLTRTFDHKYLVKYLGPYNFTVYDGVKTIENNQQKALASEDDLTKVLNYTKQRQTEPNPEYYGVAKKKNIIKIHLESFQTFLINKKVNGKEVTPFLNKLSSGKEQFTYFPNFFHQTGQGKTSDSEFTMDNSLYGLPQGSAFSLKGDNTYQSLPAILDQKQGYKSDVMHGDYKTFWNRDQVYKHFGIDKFYDATYYDMSDKNVVNLGLKDKIFFKDSANYQAKMKSPFYSHLITLTNHYPFTLDEKDATIEKSNTGDATVDGYIQTARYLDEALEEYINDLKKKGLYDNSVIMIYGDHYGISENHNNAMEKLLGEKITPAKFTDLNRTGFWIKIPGKSGGINNEYAGQVDVMPTILHLAGIDTKNYLMFGTDLFSKGHNQVVPFRNGDFITKDYKYVNGKIYSNKNNELITTQPADFEKNKKQVEKDLEMSDNVLNGDLFRFYKNPDFKKVNPSKYKYETGPKANSKK</sequence>
<organism>
    <name type="scientific">Staphylococcus aureus (strain NCTC 8325 / PS 47)</name>
    <dbReference type="NCBI Taxonomy" id="93061"/>
    <lineage>
        <taxon>Bacteria</taxon>
        <taxon>Bacillati</taxon>
        <taxon>Bacillota</taxon>
        <taxon>Bacilli</taxon>
        <taxon>Bacillales</taxon>
        <taxon>Staphylococcaceae</taxon>
        <taxon>Staphylococcus</taxon>
    </lineage>
</organism>
<reference key="1">
    <citation type="book" date="2006" name="Gram positive pathogens, 2nd edition">
        <title>The Staphylococcus aureus NCTC 8325 genome.</title>
        <editorList>
            <person name="Fischetti V."/>
            <person name="Novick R."/>
            <person name="Ferretti J."/>
            <person name="Portnoy D."/>
            <person name="Rood J."/>
        </editorList>
        <authorList>
            <person name="Gillaspy A.F."/>
            <person name="Worrell V."/>
            <person name="Orvis J."/>
            <person name="Roe B.A."/>
            <person name="Dyer D.W."/>
            <person name="Iandolo J.J."/>
        </authorList>
    </citation>
    <scope>NUCLEOTIDE SEQUENCE [LARGE SCALE GENOMIC DNA]</scope>
    <source>
        <strain>NCTC 8325 / PS 47</strain>
    </source>
</reference>
<reference key="2">
    <citation type="journal article" date="2007" name="Proc. Natl. Acad. Sci. U.S.A.">
        <title>Synthesis of glycerol phosphate lipoteichoic acid in Staphylococcus aureus.</title>
        <authorList>
            <person name="Gruendling A."/>
            <person name="Schneewind O."/>
        </authorList>
    </citation>
    <scope>FUNCTION IN LTA BIOSYNTHESIS</scope>
</reference>
<reference key="3">
    <citation type="journal article" date="2010" name="J. Bacteriol.">
        <title>Synthetic effects of secG and secY2 mutations on exoproteome biogenesis in Staphylococcus aureus.</title>
        <authorList>
            <person name="Sibbald M.J."/>
            <person name="Winter T."/>
            <person name="van der Kooi-Pol M.M."/>
            <person name="Buist G."/>
            <person name="Tsompanidou E."/>
            <person name="Bosma T."/>
            <person name="Schafer T."/>
            <person name="Ohlsen K."/>
            <person name="Hecker M."/>
            <person name="Antelmann H."/>
            <person name="Engelmann S."/>
            <person name="van Dijl J.M."/>
        </authorList>
    </citation>
    <scope>IDENTIFICATION BY MASS SPECTROMETRY</scope>
    <scope>SUBCELLULAR LOCATION</scope>
    <scope>INDUCTION</scope>
    <source>
        <strain>RN4220</strain>
    </source>
</reference>
<evidence type="ECO:0000250" key="1"/>
<evidence type="ECO:0000255" key="2"/>
<evidence type="ECO:0000256" key="3">
    <source>
        <dbReference type="SAM" id="MobiDB-lite"/>
    </source>
</evidence>
<evidence type="ECO:0000269" key="4">
    <source>
    </source>
</evidence>
<evidence type="ECO:0000269" key="5">
    <source>
    </source>
</evidence>
<evidence type="ECO:0000305" key="6"/>
<keyword id="KW-1003">Cell membrane</keyword>
<keyword id="KW-0961">Cell wall biogenesis/degradation</keyword>
<keyword id="KW-0464">Manganese</keyword>
<keyword id="KW-0472">Membrane</keyword>
<keyword id="KW-0479">Metal-binding</keyword>
<keyword id="KW-1185">Reference proteome</keyword>
<keyword id="KW-0964">Secreted</keyword>
<keyword id="KW-0808">Transferase</keyword>
<keyword id="KW-0812">Transmembrane</keyword>
<keyword id="KW-1133">Transmembrane helix</keyword>
<accession>Q2G093</accession>
<feature type="chain" id="PRO_0000305364" description="Glycerol phosphate lipoteichoic acid synthase">
    <location>
        <begin position="1"/>
        <end position="217"/>
    </location>
</feature>
<feature type="chain" id="PRO_0000305365" description="Processed glycerol phosphate lipoteichoic acid synthase">
    <location>
        <begin position="218"/>
        <end position="646"/>
    </location>
</feature>
<feature type="topological domain" description="Cytoplasmic" evidence="2">
    <location>
        <begin position="1"/>
        <end position="7"/>
    </location>
</feature>
<feature type="transmembrane region" description="Helical" evidence="2">
    <location>
        <begin position="8"/>
        <end position="28"/>
    </location>
</feature>
<feature type="topological domain" description="Extracellular" evidence="2">
    <location>
        <begin position="29"/>
        <end position="43"/>
    </location>
</feature>
<feature type="transmembrane region" description="Helical" evidence="2">
    <location>
        <begin position="44"/>
        <end position="64"/>
    </location>
</feature>
<feature type="topological domain" description="Cytoplasmic" evidence="2">
    <location>
        <begin position="65"/>
        <end position="68"/>
    </location>
</feature>
<feature type="transmembrane region" description="Helical" evidence="2">
    <location>
        <begin position="69"/>
        <end position="89"/>
    </location>
</feature>
<feature type="topological domain" description="Extracellular" evidence="2">
    <location>
        <begin position="90"/>
        <end position="119"/>
    </location>
</feature>
<feature type="transmembrane region" description="Helical" evidence="2">
    <location>
        <begin position="120"/>
        <end position="140"/>
    </location>
</feature>
<feature type="topological domain" description="Cytoplasmic" evidence="2">
    <location>
        <begin position="141"/>
        <end position="153"/>
    </location>
</feature>
<feature type="transmembrane region" description="Helical" evidence="2">
    <location>
        <begin position="154"/>
        <end position="174"/>
    </location>
</feature>
<feature type="topological domain" description="Extracellular" evidence="2">
    <location>
        <begin position="175"/>
        <end position="646"/>
    </location>
</feature>
<feature type="region of interest" description="Disordered" evidence="3">
    <location>
        <begin position="623"/>
        <end position="646"/>
    </location>
</feature>
<feature type="compositionally biased region" description="Basic and acidic residues" evidence="3">
    <location>
        <begin position="623"/>
        <end position="638"/>
    </location>
</feature>
<feature type="active site" evidence="1">
    <location>
        <position position="300"/>
    </location>
</feature>
<feature type="binding site" evidence="1">
    <location>
        <position position="255"/>
    </location>
    <ligand>
        <name>Mn(2+)</name>
        <dbReference type="ChEBI" id="CHEBI:29035"/>
    </ligand>
</feature>
<feature type="binding site" evidence="1">
    <location>
        <position position="300"/>
    </location>
    <ligand>
        <name>Mn(2+)</name>
        <dbReference type="ChEBI" id="CHEBI:29035"/>
    </ligand>
</feature>
<feature type="binding site" evidence="1">
    <location>
        <position position="416"/>
    </location>
    <ligand>
        <name>substrate</name>
    </ligand>
</feature>
<feature type="binding site" evidence="1">
    <location>
        <position position="475"/>
    </location>
    <ligand>
        <name>Mn(2+)</name>
        <dbReference type="ChEBI" id="CHEBI:29035"/>
    </ligand>
</feature>
<feature type="binding site" evidence="1">
    <location>
        <position position="476"/>
    </location>
    <ligand>
        <name>Mn(2+)</name>
        <dbReference type="ChEBI" id="CHEBI:29035"/>
    </ligand>
</feature>
<feature type="site" description="Cleavage" evidence="1">
    <location>
        <begin position="217"/>
        <end position="218"/>
    </location>
</feature>
<dbReference type="EC" id="2.7.8.-"/>
<dbReference type="EMBL" id="CP000253">
    <property type="protein sequence ID" value="ABD29861.1"/>
    <property type="molecule type" value="Genomic_DNA"/>
</dbReference>
<dbReference type="RefSeq" id="WP_000098285.1">
    <property type="nucleotide sequence ID" value="NZ_LS483365.1"/>
</dbReference>
<dbReference type="RefSeq" id="YP_499287.1">
    <property type="nucleotide sequence ID" value="NC_007795.1"/>
</dbReference>
<dbReference type="SMR" id="Q2G093"/>
<dbReference type="STRING" id="93061.SAOUHSC_00728"/>
<dbReference type="PaxDb" id="1280-SAXN108_0786"/>
<dbReference type="GeneID" id="3920973"/>
<dbReference type="KEGG" id="sao:SAOUHSC_00728"/>
<dbReference type="PATRIC" id="fig|93061.5.peg.657"/>
<dbReference type="eggNOG" id="COG1368">
    <property type="taxonomic scope" value="Bacteria"/>
</dbReference>
<dbReference type="HOGENOM" id="CLU_021310_0_0_9"/>
<dbReference type="OrthoDB" id="5901192at2"/>
<dbReference type="BioCyc" id="MetaCyc:MONOMER-20004"/>
<dbReference type="UniPathway" id="UPA00556"/>
<dbReference type="Proteomes" id="UP000008816">
    <property type="component" value="Chromosome"/>
</dbReference>
<dbReference type="GO" id="GO:0005576">
    <property type="term" value="C:extracellular region"/>
    <property type="evidence" value="ECO:0007669"/>
    <property type="project" value="UniProtKB-SubCell"/>
</dbReference>
<dbReference type="GO" id="GO:0016020">
    <property type="term" value="C:membrane"/>
    <property type="evidence" value="ECO:0000318"/>
    <property type="project" value="GO_Central"/>
</dbReference>
<dbReference type="GO" id="GO:0005886">
    <property type="term" value="C:plasma membrane"/>
    <property type="evidence" value="ECO:0007669"/>
    <property type="project" value="UniProtKB-SubCell"/>
</dbReference>
<dbReference type="GO" id="GO:0046872">
    <property type="term" value="F:metal ion binding"/>
    <property type="evidence" value="ECO:0007669"/>
    <property type="project" value="UniProtKB-KW"/>
</dbReference>
<dbReference type="GO" id="GO:0016740">
    <property type="term" value="F:transferase activity"/>
    <property type="evidence" value="ECO:0000318"/>
    <property type="project" value="GO_Central"/>
</dbReference>
<dbReference type="GO" id="GO:0071555">
    <property type="term" value="P:cell wall organization"/>
    <property type="evidence" value="ECO:0007669"/>
    <property type="project" value="UniProtKB-KW"/>
</dbReference>
<dbReference type="GO" id="GO:0070395">
    <property type="term" value="P:lipoteichoic acid biosynthetic process"/>
    <property type="evidence" value="ECO:0007669"/>
    <property type="project" value="UniProtKB-UniPathway"/>
</dbReference>
<dbReference type="CDD" id="cd16015">
    <property type="entry name" value="LTA_synthase"/>
    <property type="match status" value="1"/>
</dbReference>
<dbReference type="Gene3D" id="3.30.1120.170">
    <property type="match status" value="1"/>
</dbReference>
<dbReference type="Gene3D" id="3.40.720.10">
    <property type="entry name" value="Alkaline Phosphatase, subunit A"/>
    <property type="match status" value="1"/>
</dbReference>
<dbReference type="InterPro" id="IPR017850">
    <property type="entry name" value="Alkaline_phosphatase_core_sf"/>
</dbReference>
<dbReference type="InterPro" id="IPR012160">
    <property type="entry name" value="LtaS-like"/>
</dbReference>
<dbReference type="InterPro" id="IPR050448">
    <property type="entry name" value="OpgB/LTA_synthase_biosynth"/>
</dbReference>
<dbReference type="InterPro" id="IPR000917">
    <property type="entry name" value="Sulfatase_N"/>
</dbReference>
<dbReference type="PANTHER" id="PTHR47371">
    <property type="entry name" value="LIPOTEICHOIC ACID SYNTHASE"/>
    <property type="match status" value="1"/>
</dbReference>
<dbReference type="PANTHER" id="PTHR47371:SF3">
    <property type="entry name" value="PHOSPHOGLYCEROL TRANSFERASE I"/>
    <property type="match status" value="1"/>
</dbReference>
<dbReference type="Pfam" id="PF00884">
    <property type="entry name" value="Sulfatase"/>
    <property type="match status" value="1"/>
</dbReference>
<dbReference type="PIRSF" id="PIRSF005091">
    <property type="entry name" value="Mmb_sulf_HI1246"/>
    <property type="match status" value="1"/>
</dbReference>
<dbReference type="SUPFAM" id="SSF53649">
    <property type="entry name" value="Alkaline phosphatase-like"/>
    <property type="match status" value="1"/>
</dbReference>
<gene>
    <name type="primary">ltaS</name>
    <name type="synonym">yfnI</name>
    <name type="ordered locus">SAOUHSC_00728</name>
</gene>
<protein>
    <recommendedName>
        <fullName>Lipoteichoic acid synthase</fullName>
    </recommendedName>
    <component>
        <recommendedName>
            <fullName>Glycerol phosphate lipoteichoic acid synthase</fullName>
            <shortName>LTA synthase</shortName>
            <ecNumber>2.7.8.-</ecNumber>
        </recommendedName>
        <alternativeName>
            <fullName>Polyglycerol phosphate synthase</fullName>
        </alternativeName>
    </component>
    <component>
        <recommendedName>
            <fullName>Processed glycerol phosphate lipoteichoic acid synthase</fullName>
        </recommendedName>
    </component>
</protein>
<name>LTAS_STAA8</name>
<comment type="function">
    <text evidence="4">Catalyzes the polymerization of lipoteichoic acid (LTA) polyglycerol phosphate, a reaction that presumably uses phosphatidylglycerol (PG) as substrate. Is required for staphylococcal growth and cell division process.</text>
</comment>
<comment type="pathway">
    <text>Cell wall biogenesis; lipoteichoic acid biosynthesis.</text>
</comment>
<comment type="subcellular location">
    <subcellularLocation>
        <location evidence="6">Cell membrane</location>
        <topology evidence="6">Multi-pass membrane protein</topology>
    </subcellularLocation>
</comment>
<comment type="subcellular location">
    <molecule>Processed glycerol phosphate lipoteichoic acid synthase</molecule>
    <subcellularLocation>
        <location>Secreted</location>
    </subcellularLocation>
</comment>
<comment type="induction">
    <text evidence="5">Less protein is secreted in a secG or double secG/secY2 mutant (at protein level).</text>
</comment>
<comment type="PTM">
    <text evidence="6">Proteolytically cleaved.</text>
</comment>
<comment type="similarity">
    <text evidence="6">Belongs to the LTA synthase family.</text>
</comment>
<proteinExistence type="evidence at protein level"/>